<accession>O94692</accession>
<keyword id="KW-0010">Activator</keyword>
<keyword id="KW-0067">ATP-binding</keyword>
<keyword id="KW-0156">Chromatin regulator</keyword>
<keyword id="KW-0227">DNA damage</keyword>
<keyword id="KW-0234">DNA repair</keyword>
<keyword id="KW-0347">Helicase</keyword>
<keyword id="KW-0378">Hydrolase</keyword>
<keyword id="KW-0547">Nucleotide-binding</keyword>
<keyword id="KW-0539">Nucleus</keyword>
<keyword id="KW-1185">Reference proteome</keyword>
<keyword id="KW-0698">rRNA processing</keyword>
<keyword id="KW-0804">Transcription</keyword>
<keyword id="KW-0805">Transcription regulation</keyword>
<name>RUVB2_SCHPO</name>
<comment type="function">
    <text evidence="1">DNA helicase which participates in several chromatin remodeling complexes, including the SWR1 and the INO80 complexes. The SWR1 complex mediates the ATP-dependent exchange of histone H2A for the H2A variant HZT1 leading to transcriptional regulation of selected genes by chromatin remodeling. The INO80 complex remodels chromatin by shifting nucleosomes and is involved in DNA repair. Also involved in pre-rRNA processing (By similarity).</text>
</comment>
<comment type="catalytic activity">
    <reaction>
        <text>ATP + H2O = ADP + phosphate + H(+)</text>
        <dbReference type="Rhea" id="RHEA:13065"/>
        <dbReference type="ChEBI" id="CHEBI:15377"/>
        <dbReference type="ChEBI" id="CHEBI:15378"/>
        <dbReference type="ChEBI" id="CHEBI:30616"/>
        <dbReference type="ChEBI" id="CHEBI:43474"/>
        <dbReference type="ChEBI" id="CHEBI:456216"/>
        <dbReference type="EC" id="3.6.4.12"/>
    </reaction>
</comment>
<comment type="subunit">
    <text evidence="1 2">May form heterododecamers with RVB1. Component of the SWR1 chromatin remodeling complex, the INO80 chromatin remodeling complex, and of the R2TP complex (By similarity). Interacts with dil1.</text>
</comment>
<comment type="subcellular location">
    <subcellularLocation>
        <location evidence="1">Nucleus</location>
    </subcellularLocation>
</comment>
<comment type="similarity">
    <text evidence="3">Belongs to the RuvB family.</text>
</comment>
<organism>
    <name type="scientific">Schizosaccharomyces pombe (strain 972 / ATCC 24843)</name>
    <name type="common">Fission yeast</name>
    <dbReference type="NCBI Taxonomy" id="284812"/>
    <lineage>
        <taxon>Eukaryota</taxon>
        <taxon>Fungi</taxon>
        <taxon>Dikarya</taxon>
        <taxon>Ascomycota</taxon>
        <taxon>Taphrinomycotina</taxon>
        <taxon>Schizosaccharomycetes</taxon>
        <taxon>Schizosaccharomycetales</taxon>
        <taxon>Schizosaccharomycetaceae</taxon>
        <taxon>Schizosaccharomyces</taxon>
    </lineage>
</organism>
<dbReference type="EC" id="3.6.4.12"/>
<dbReference type="EMBL" id="CU329671">
    <property type="protein sequence ID" value="CAB36870.1"/>
    <property type="molecule type" value="Genomic_DNA"/>
</dbReference>
<dbReference type="PIR" id="T40697">
    <property type="entry name" value="T40697"/>
</dbReference>
<dbReference type="RefSeq" id="NP_595640.1">
    <property type="nucleotide sequence ID" value="NM_001021534.2"/>
</dbReference>
<dbReference type="SMR" id="O94692"/>
<dbReference type="BioGRID" id="277592">
    <property type="interactions" value="27"/>
</dbReference>
<dbReference type="FunCoup" id="O94692">
    <property type="interactions" value="756"/>
</dbReference>
<dbReference type="IntAct" id="O94692">
    <property type="interactions" value="2"/>
</dbReference>
<dbReference type="MINT" id="O94692"/>
<dbReference type="STRING" id="284812.O94692"/>
<dbReference type="iPTMnet" id="O94692"/>
<dbReference type="PaxDb" id="4896-SPBC83.08.1"/>
<dbReference type="EnsemblFungi" id="SPBC83.08.1">
    <property type="protein sequence ID" value="SPBC83.08.1:pep"/>
    <property type="gene ID" value="SPBC83.08"/>
</dbReference>
<dbReference type="GeneID" id="2541077"/>
<dbReference type="KEGG" id="spo:2541077"/>
<dbReference type="PomBase" id="SPBC83.08">
    <property type="gene designation" value="rvb2"/>
</dbReference>
<dbReference type="VEuPathDB" id="FungiDB:SPBC83.08"/>
<dbReference type="eggNOG" id="KOG2680">
    <property type="taxonomic scope" value="Eukaryota"/>
</dbReference>
<dbReference type="HOGENOM" id="CLU_028311_4_0_1"/>
<dbReference type="InParanoid" id="O94692"/>
<dbReference type="OMA" id="IINTEPY"/>
<dbReference type="PhylomeDB" id="O94692"/>
<dbReference type="PRO" id="PR:O94692"/>
<dbReference type="Proteomes" id="UP000002485">
    <property type="component" value="Chromosome II"/>
</dbReference>
<dbReference type="GO" id="GO:0005829">
    <property type="term" value="C:cytosol"/>
    <property type="evidence" value="ECO:0007005"/>
    <property type="project" value="PomBase"/>
</dbReference>
<dbReference type="GO" id="GO:0031011">
    <property type="term" value="C:Ino80 complex"/>
    <property type="evidence" value="ECO:0000353"/>
    <property type="project" value="PomBase"/>
</dbReference>
<dbReference type="GO" id="GO:0035267">
    <property type="term" value="C:NuA4 histone acetyltransferase complex"/>
    <property type="evidence" value="ECO:0000318"/>
    <property type="project" value="GO_Central"/>
</dbReference>
<dbReference type="GO" id="GO:0005634">
    <property type="term" value="C:nucleus"/>
    <property type="evidence" value="ECO:0007005"/>
    <property type="project" value="PomBase"/>
</dbReference>
<dbReference type="GO" id="GO:0097255">
    <property type="term" value="C:R2TP complex"/>
    <property type="evidence" value="ECO:0000318"/>
    <property type="project" value="GO_Central"/>
</dbReference>
<dbReference type="GO" id="GO:0000812">
    <property type="term" value="C:Swr1 complex"/>
    <property type="evidence" value="ECO:0000314"/>
    <property type="project" value="PomBase"/>
</dbReference>
<dbReference type="GO" id="GO:0005524">
    <property type="term" value="F:ATP binding"/>
    <property type="evidence" value="ECO:0007669"/>
    <property type="project" value="UniProtKB-KW"/>
</dbReference>
<dbReference type="GO" id="GO:0016887">
    <property type="term" value="F:ATP hydrolysis activity"/>
    <property type="evidence" value="ECO:0000250"/>
    <property type="project" value="PomBase"/>
</dbReference>
<dbReference type="GO" id="GO:0140658">
    <property type="term" value="F:ATP-dependent chromatin remodeler activity"/>
    <property type="evidence" value="ECO:0000303"/>
    <property type="project" value="PomBase"/>
</dbReference>
<dbReference type="GO" id="GO:0003678">
    <property type="term" value="F:DNA helicase activity"/>
    <property type="evidence" value="ECO:0000318"/>
    <property type="project" value="GO_Central"/>
</dbReference>
<dbReference type="GO" id="GO:0000492">
    <property type="term" value="P:box C/D snoRNP assembly"/>
    <property type="evidence" value="ECO:0000318"/>
    <property type="project" value="GO_Central"/>
</dbReference>
<dbReference type="GO" id="GO:0006338">
    <property type="term" value="P:chromatin remodeling"/>
    <property type="evidence" value="ECO:0000318"/>
    <property type="project" value="GO_Central"/>
</dbReference>
<dbReference type="GO" id="GO:0006281">
    <property type="term" value="P:DNA repair"/>
    <property type="evidence" value="ECO:0007669"/>
    <property type="project" value="UniProtKB-KW"/>
</dbReference>
<dbReference type="GO" id="GO:0006357">
    <property type="term" value="P:regulation of transcription by RNA polymerase II"/>
    <property type="evidence" value="ECO:0000318"/>
    <property type="project" value="GO_Central"/>
</dbReference>
<dbReference type="GO" id="GO:0006364">
    <property type="term" value="P:rRNA processing"/>
    <property type="evidence" value="ECO:0007669"/>
    <property type="project" value="UniProtKB-KW"/>
</dbReference>
<dbReference type="FunFam" id="3.40.50.300:FF:002221">
    <property type="entry name" value="RuvB-like 2"/>
    <property type="match status" value="2"/>
</dbReference>
<dbReference type="FunFam" id="1.10.8.60:FF:000010">
    <property type="entry name" value="RuvB-like helicase"/>
    <property type="match status" value="1"/>
</dbReference>
<dbReference type="FunFam" id="2.40.50.360:FF:000002">
    <property type="entry name" value="RuvB-like helicase"/>
    <property type="match status" value="1"/>
</dbReference>
<dbReference type="Gene3D" id="1.10.8.60">
    <property type="match status" value="1"/>
</dbReference>
<dbReference type="Gene3D" id="3.40.50.300">
    <property type="entry name" value="P-loop containing nucleotide triphosphate hydrolases"/>
    <property type="match status" value="1"/>
</dbReference>
<dbReference type="Gene3D" id="2.40.50.360">
    <property type="entry name" value="RuvB-like helicase, domain II"/>
    <property type="match status" value="1"/>
</dbReference>
<dbReference type="InterPro" id="IPR003593">
    <property type="entry name" value="AAA+_ATPase"/>
</dbReference>
<dbReference type="InterPro" id="IPR027417">
    <property type="entry name" value="P-loop_NTPase"/>
</dbReference>
<dbReference type="InterPro" id="IPR027238">
    <property type="entry name" value="RuvB-like"/>
</dbReference>
<dbReference type="InterPro" id="IPR041048">
    <property type="entry name" value="RuvB-like_C"/>
</dbReference>
<dbReference type="InterPro" id="IPR042487">
    <property type="entry name" value="RuvBL1/2_DNA/RNA_bd_dom"/>
</dbReference>
<dbReference type="InterPro" id="IPR010339">
    <property type="entry name" value="TIP49_P-loop"/>
</dbReference>
<dbReference type="PANTHER" id="PTHR11093">
    <property type="entry name" value="RUVB-RELATED REPTIN AND PONTIN"/>
    <property type="match status" value="1"/>
</dbReference>
<dbReference type="Pfam" id="PF06068">
    <property type="entry name" value="TIP49"/>
    <property type="match status" value="1"/>
</dbReference>
<dbReference type="Pfam" id="PF17856">
    <property type="entry name" value="TIP49_C"/>
    <property type="match status" value="1"/>
</dbReference>
<dbReference type="SMART" id="SM00382">
    <property type="entry name" value="AAA"/>
    <property type="match status" value="1"/>
</dbReference>
<dbReference type="SUPFAM" id="SSF52540">
    <property type="entry name" value="P-loop containing nucleoside triphosphate hydrolases"/>
    <property type="match status" value="1"/>
</dbReference>
<feature type="chain" id="PRO_0000165672" description="RuvB-like helicase 2">
    <location>
        <begin position="1"/>
        <end position="465"/>
    </location>
</feature>
<feature type="binding site" evidence="1">
    <location>
        <begin position="72"/>
        <end position="79"/>
    </location>
    <ligand>
        <name>ATP</name>
        <dbReference type="ChEBI" id="CHEBI:30616"/>
    </ligand>
</feature>
<protein>
    <recommendedName>
        <fullName>RuvB-like helicase 2</fullName>
        <ecNumber>3.6.4.12</ecNumber>
    </recommendedName>
</protein>
<proteinExistence type="evidence at protein level"/>
<reference key="1">
    <citation type="journal article" date="2002" name="Nature">
        <title>The genome sequence of Schizosaccharomyces pombe.</title>
        <authorList>
            <person name="Wood V."/>
            <person name="Gwilliam R."/>
            <person name="Rajandream M.A."/>
            <person name="Lyne M.H."/>
            <person name="Lyne R."/>
            <person name="Stewart A."/>
            <person name="Sgouros J.G."/>
            <person name="Peat N."/>
            <person name="Hayles J."/>
            <person name="Baker S.G."/>
            <person name="Basham D."/>
            <person name="Bowman S."/>
            <person name="Brooks K."/>
            <person name="Brown D."/>
            <person name="Brown S."/>
            <person name="Chillingworth T."/>
            <person name="Churcher C.M."/>
            <person name="Collins M."/>
            <person name="Connor R."/>
            <person name="Cronin A."/>
            <person name="Davis P."/>
            <person name="Feltwell T."/>
            <person name="Fraser A."/>
            <person name="Gentles S."/>
            <person name="Goble A."/>
            <person name="Hamlin N."/>
            <person name="Harris D.E."/>
            <person name="Hidalgo J."/>
            <person name="Hodgson G."/>
            <person name="Holroyd S."/>
            <person name="Hornsby T."/>
            <person name="Howarth S."/>
            <person name="Huckle E.J."/>
            <person name="Hunt S."/>
            <person name="Jagels K."/>
            <person name="James K.D."/>
            <person name="Jones L."/>
            <person name="Jones M."/>
            <person name="Leather S."/>
            <person name="McDonald S."/>
            <person name="McLean J."/>
            <person name="Mooney P."/>
            <person name="Moule S."/>
            <person name="Mungall K.L."/>
            <person name="Murphy L.D."/>
            <person name="Niblett D."/>
            <person name="Odell C."/>
            <person name="Oliver K."/>
            <person name="O'Neil S."/>
            <person name="Pearson D."/>
            <person name="Quail M.A."/>
            <person name="Rabbinowitsch E."/>
            <person name="Rutherford K.M."/>
            <person name="Rutter S."/>
            <person name="Saunders D."/>
            <person name="Seeger K."/>
            <person name="Sharp S."/>
            <person name="Skelton J."/>
            <person name="Simmonds M.N."/>
            <person name="Squares R."/>
            <person name="Squares S."/>
            <person name="Stevens K."/>
            <person name="Taylor K."/>
            <person name="Taylor R.G."/>
            <person name="Tivey A."/>
            <person name="Walsh S.V."/>
            <person name="Warren T."/>
            <person name="Whitehead S."/>
            <person name="Woodward J.R."/>
            <person name="Volckaert G."/>
            <person name="Aert R."/>
            <person name="Robben J."/>
            <person name="Grymonprez B."/>
            <person name="Weltjens I."/>
            <person name="Vanstreels E."/>
            <person name="Rieger M."/>
            <person name="Schaefer M."/>
            <person name="Mueller-Auer S."/>
            <person name="Gabel C."/>
            <person name="Fuchs M."/>
            <person name="Duesterhoeft A."/>
            <person name="Fritzc C."/>
            <person name="Holzer E."/>
            <person name="Moestl D."/>
            <person name="Hilbert H."/>
            <person name="Borzym K."/>
            <person name="Langer I."/>
            <person name="Beck A."/>
            <person name="Lehrach H."/>
            <person name="Reinhardt R."/>
            <person name="Pohl T.M."/>
            <person name="Eger P."/>
            <person name="Zimmermann W."/>
            <person name="Wedler H."/>
            <person name="Wambutt R."/>
            <person name="Purnelle B."/>
            <person name="Goffeau A."/>
            <person name="Cadieu E."/>
            <person name="Dreano S."/>
            <person name="Gloux S."/>
            <person name="Lelaure V."/>
            <person name="Mottier S."/>
            <person name="Galibert F."/>
            <person name="Aves S.J."/>
            <person name="Xiang Z."/>
            <person name="Hunt C."/>
            <person name="Moore K."/>
            <person name="Hurst S.M."/>
            <person name="Lucas M."/>
            <person name="Rochet M."/>
            <person name="Gaillardin C."/>
            <person name="Tallada V.A."/>
            <person name="Garzon A."/>
            <person name="Thode G."/>
            <person name="Daga R.R."/>
            <person name="Cruzado L."/>
            <person name="Jimenez J."/>
            <person name="Sanchez M."/>
            <person name="del Rey F."/>
            <person name="Benito J."/>
            <person name="Dominguez A."/>
            <person name="Revuelta J.L."/>
            <person name="Moreno S."/>
            <person name="Armstrong J."/>
            <person name="Forsburg S.L."/>
            <person name="Cerutti L."/>
            <person name="Lowe T."/>
            <person name="McCombie W.R."/>
            <person name="Paulsen I."/>
            <person name="Potashkin J."/>
            <person name="Shpakovski G.V."/>
            <person name="Ussery D."/>
            <person name="Barrell B.G."/>
            <person name="Nurse P."/>
        </authorList>
    </citation>
    <scope>NUCLEOTIDE SEQUENCE [LARGE SCALE GENOMIC DNA]</scope>
    <source>
        <strain>972 / ATCC 24843</strain>
    </source>
</reference>
<reference key="2">
    <citation type="journal article" date="2010" name="Cell Cycle">
        <title>High-throughput knockout screen in Schizosaccharomyces pombe identifies a novel gene required for efficient homolog disjunction during meiosis I.</title>
        <authorList>
            <person name="Rumpf C."/>
            <person name="Cipak L."/>
            <person name="Novatchkova M."/>
            <person name="Li Z."/>
            <person name="Polakova S."/>
            <person name="Dudas A."/>
            <person name="Kovacikova I."/>
            <person name="Miadokova E."/>
            <person name="Ammerer G."/>
            <person name="Gregan J."/>
        </authorList>
    </citation>
    <scope>IDENTIFICATION BY MASS SPECTROMETRY</scope>
    <scope>INTERACTION WITH DIL1</scope>
</reference>
<gene>
    <name type="primary">rvb2</name>
    <name type="ORF">SPBC83.08</name>
</gene>
<sequence length="465" mass="51562">MSISVTSHNDVSKLERIGAHSHIKGIGLNDNLEPKESSQGMVGQVKARRAAGVILKMIQEGRIAGRAILMAGPPSTGKTAIAMGMAQSLGSDTPFVTLSASEVYSLEMSKTEALLQALRKSIGVRIKEETEIIEGEVVEVQIDRSITGGNKQGKLTIRSTDMETVYDLGTKMIDSLTKEKVLAGDVISIDKSVGRVTKLGRSFSRARDYDAMGADTRFVQCPQGEIQKRKEVVHTVSLHDIDVINSRTQGFLALFSGDTGEIKPEVREQINTKVSEWREEGKAEIVPGVLFVDEVHMLDIECFSFFNRALEDDLAPIVIMASNRGITRIRGTNYRSPHGIPVDLLDRMLIISTLPYSHEEVKEILKIRCQEEDVDMEPSALDYLSTIGQETSLRYALLLISSSNQVALKRKSATIEESDIRRVYELFLDQKRSVEYLEEYGKNYITENEWSASGAQDNAVAMQED</sequence>
<evidence type="ECO:0000250" key="1"/>
<evidence type="ECO:0000269" key="2">
    <source>
    </source>
</evidence>
<evidence type="ECO:0000305" key="3"/>